<name>PTH_SALNS</name>
<feature type="chain" id="PRO_1000092983" description="Peptidyl-tRNA hydrolase">
    <location>
        <begin position="1"/>
        <end position="194"/>
    </location>
</feature>
<feature type="active site" description="Proton acceptor" evidence="1">
    <location>
        <position position="21"/>
    </location>
</feature>
<feature type="binding site" evidence="1">
    <location>
        <position position="16"/>
    </location>
    <ligand>
        <name>tRNA</name>
        <dbReference type="ChEBI" id="CHEBI:17843"/>
    </ligand>
</feature>
<feature type="binding site" evidence="1">
    <location>
        <position position="67"/>
    </location>
    <ligand>
        <name>tRNA</name>
        <dbReference type="ChEBI" id="CHEBI:17843"/>
    </ligand>
</feature>
<feature type="binding site" evidence="1">
    <location>
        <position position="69"/>
    </location>
    <ligand>
        <name>tRNA</name>
        <dbReference type="ChEBI" id="CHEBI:17843"/>
    </ligand>
</feature>
<feature type="binding site" evidence="1">
    <location>
        <position position="115"/>
    </location>
    <ligand>
        <name>tRNA</name>
        <dbReference type="ChEBI" id="CHEBI:17843"/>
    </ligand>
</feature>
<feature type="site" description="Discriminates between blocked and unblocked aminoacyl-tRNA" evidence="1">
    <location>
        <position position="11"/>
    </location>
</feature>
<feature type="site" description="Stabilizes the basic form of H active site to accept a proton" evidence="1">
    <location>
        <position position="94"/>
    </location>
</feature>
<dbReference type="EC" id="3.1.1.29" evidence="1"/>
<dbReference type="EMBL" id="CP001113">
    <property type="protein sequence ID" value="ACF63713.1"/>
    <property type="molecule type" value="Genomic_DNA"/>
</dbReference>
<dbReference type="RefSeq" id="WP_000985595.1">
    <property type="nucleotide sequence ID" value="NZ_CCMR01000003.1"/>
</dbReference>
<dbReference type="SMR" id="B4SUH1"/>
<dbReference type="KEGG" id="see:SNSL254_A1916"/>
<dbReference type="HOGENOM" id="CLU_062456_3_1_6"/>
<dbReference type="Proteomes" id="UP000008824">
    <property type="component" value="Chromosome"/>
</dbReference>
<dbReference type="GO" id="GO:0005737">
    <property type="term" value="C:cytoplasm"/>
    <property type="evidence" value="ECO:0007669"/>
    <property type="project" value="UniProtKB-SubCell"/>
</dbReference>
<dbReference type="GO" id="GO:0004045">
    <property type="term" value="F:peptidyl-tRNA hydrolase activity"/>
    <property type="evidence" value="ECO:0007669"/>
    <property type="project" value="UniProtKB-UniRule"/>
</dbReference>
<dbReference type="GO" id="GO:0000049">
    <property type="term" value="F:tRNA binding"/>
    <property type="evidence" value="ECO:0007669"/>
    <property type="project" value="UniProtKB-UniRule"/>
</dbReference>
<dbReference type="GO" id="GO:0006515">
    <property type="term" value="P:protein quality control for misfolded or incompletely synthesized proteins"/>
    <property type="evidence" value="ECO:0007669"/>
    <property type="project" value="UniProtKB-UniRule"/>
</dbReference>
<dbReference type="GO" id="GO:0072344">
    <property type="term" value="P:rescue of stalled ribosome"/>
    <property type="evidence" value="ECO:0007669"/>
    <property type="project" value="UniProtKB-UniRule"/>
</dbReference>
<dbReference type="CDD" id="cd00462">
    <property type="entry name" value="PTH"/>
    <property type="match status" value="1"/>
</dbReference>
<dbReference type="FunFam" id="3.40.50.1470:FF:000001">
    <property type="entry name" value="Peptidyl-tRNA hydrolase"/>
    <property type="match status" value="1"/>
</dbReference>
<dbReference type="Gene3D" id="3.40.50.1470">
    <property type="entry name" value="Peptidyl-tRNA hydrolase"/>
    <property type="match status" value="1"/>
</dbReference>
<dbReference type="HAMAP" id="MF_00083">
    <property type="entry name" value="Pept_tRNA_hydro_bact"/>
    <property type="match status" value="1"/>
</dbReference>
<dbReference type="InterPro" id="IPR001328">
    <property type="entry name" value="Pept_tRNA_hydro"/>
</dbReference>
<dbReference type="InterPro" id="IPR018171">
    <property type="entry name" value="Pept_tRNA_hydro_CS"/>
</dbReference>
<dbReference type="InterPro" id="IPR036416">
    <property type="entry name" value="Pept_tRNA_hydro_sf"/>
</dbReference>
<dbReference type="NCBIfam" id="TIGR00447">
    <property type="entry name" value="pth"/>
    <property type="match status" value="1"/>
</dbReference>
<dbReference type="PANTHER" id="PTHR17224">
    <property type="entry name" value="PEPTIDYL-TRNA HYDROLASE"/>
    <property type="match status" value="1"/>
</dbReference>
<dbReference type="PANTHER" id="PTHR17224:SF1">
    <property type="entry name" value="PEPTIDYL-TRNA HYDROLASE"/>
    <property type="match status" value="1"/>
</dbReference>
<dbReference type="Pfam" id="PF01195">
    <property type="entry name" value="Pept_tRNA_hydro"/>
    <property type="match status" value="1"/>
</dbReference>
<dbReference type="SUPFAM" id="SSF53178">
    <property type="entry name" value="Peptidyl-tRNA hydrolase-like"/>
    <property type="match status" value="1"/>
</dbReference>
<dbReference type="PROSITE" id="PS01195">
    <property type="entry name" value="PEPT_TRNA_HYDROL_1"/>
    <property type="match status" value="1"/>
</dbReference>
<dbReference type="PROSITE" id="PS01196">
    <property type="entry name" value="PEPT_TRNA_HYDROL_2"/>
    <property type="match status" value="1"/>
</dbReference>
<sequence>MAIKLIVGLANPGAEYAATRHNAGAWYVDLLAERLRAPLREEPKFFGYTSRITLEGEDVRLLVPTTFMNLSGKAVGAMASFYRIQPDEILVAHDELDLPPGVAKFKLGGGHGGHNGLKDIISKLGNNPNFHRLRVGIGHPGDKNKVVGFVLGKPPVSEQKLIDEAIDEAARCTELWFKEGLAKATSRLHTFKAQ</sequence>
<comment type="function">
    <text evidence="1">Hydrolyzes ribosome-free peptidyl-tRNAs (with 1 or more amino acids incorporated), which drop off the ribosome during protein synthesis, or as a result of ribosome stalling.</text>
</comment>
<comment type="function">
    <text evidence="1">Catalyzes the release of premature peptidyl moieties from peptidyl-tRNA molecules trapped in stalled 50S ribosomal subunits, and thus maintains levels of free tRNAs and 50S ribosomes.</text>
</comment>
<comment type="catalytic activity">
    <reaction evidence="1">
        <text>an N-acyl-L-alpha-aminoacyl-tRNA + H2O = an N-acyl-L-amino acid + a tRNA + H(+)</text>
        <dbReference type="Rhea" id="RHEA:54448"/>
        <dbReference type="Rhea" id="RHEA-COMP:10123"/>
        <dbReference type="Rhea" id="RHEA-COMP:13883"/>
        <dbReference type="ChEBI" id="CHEBI:15377"/>
        <dbReference type="ChEBI" id="CHEBI:15378"/>
        <dbReference type="ChEBI" id="CHEBI:59874"/>
        <dbReference type="ChEBI" id="CHEBI:78442"/>
        <dbReference type="ChEBI" id="CHEBI:138191"/>
        <dbReference type="EC" id="3.1.1.29"/>
    </reaction>
</comment>
<comment type="subunit">
    <text evidence="1">Monomer.</text>
</comment>
<comment type="subcellular location">
    <subcellularLocation>
        <location evidence="1">Cytoplasm</location>
    </subcellularLocation>
</comment>
<comment type="similarity">
    <text evidence="1">Belongs to the PTH family.</text>
</comment>
<accession>B4SUH1</accession>
<keyword id="KW-0963">Cytoplasm</keyword>
<keyword id="KW-0378">Hydrolase</keyword>
<keyword id="KW-0694">RNA-binding</keyword>
<keyword id="KW-0820">tRNA-binding</keyword>
<gene>
    <name evidence="1" type="primary">pth</name>
    <name type="ordered locus">SNSL254_A1916</name>
</gene>
<proteinExistence type="inferred from homology"/>
<protein>
    <recommendedName>
        <fullName evidence="1">Peptidyl-tRNA hydrolase</fullName>
        <shortName evidence="1">Pth</shortName>
        <ecNumber evidence="1">3.1.1.29</ecNumber>
    </recommendedName>
</protein>
<reference key="1">
    <citation type="journal article" date="2011" name="J. Bacteriol.">
        <title>Comparative genomics of 28 Salmonella enterica isolates: evidence for CRISPR-mediated adaptive sublineage evolution.</title>
        <authorList>
            <person name="Fricke W.F."/>
            <person name="Mammel M.K."/>
            <person name="McDermott P.F."/>
            <person name="Tartera C."/>
            <person name="White D.G."/>
            <person name="Leclerc J.E."/>
            <person name="Ravel J."/>
            <person name="Cebula T.A."/>
        </authorList>
    </citation>
    <scope>NUCLEOTIDE SEQUENCE [LARGE SCALE GENOMIC DNA]</scope>
    <source>
        <strain>SL254</strain>
    </source>
</reference>
<evidence type="ECO:0000255" key="1">
    <source>
        <dbReference type="HAMAP-Rule" id="MF_00083"/>
    </source>
</evidence>
<organism>
    <name type="scientific">Salmonella newport (strain SL254)</name>
    <dbReference type="NCBI Taxonomy" id="423368"/>
    <lineage>
        <taxon>Bacteria</taxon>
        <taxon>Pseudomonadati</taxon>
        <taxon>Pseudomonadota</taxon>
        <taxon>Gammaproteobacteria</taxon>
        <taxon>Enterobacterales</taxon>
        <taxon>Enterobacteriaceae</taxon>
        <taxon>Salmonella</taxon>
    </lineage>
</organism>